<name>GLYA1_RHORT</name>
<dbReference type="EC" id="2.1.2.1" evidence="1"/>
<dbReference type="EMBL" id="CP000230">
    <property type="protein sequence ID" value="ABC21943.1"/>
    <property type="molecule type" value="Genomic_DNA"/>
</dbReference>
<dbReference type="RefSeq" id="WP_011388897.1">
    <property type="nucleotide sequence ID" value="NC_007643.1"/>
</dbReference>
<dbReference type="RefSeq" id="YP_426230.1">
    <property type="nucleotide sequence ID" value="NC_007643.1"/>
</dbReference>
<dbReference type="SMR" id="Q2RVA2"/>
<dbReference type="STRING" id="269796.Rru_A1142"/>
<dbReference type="EnsemblBacteria" id="ABC21943">
    <property type="protein sequence ID" value="ABC21943"/>
    <property type="gene ID" value="Rru_A1142"/>
</dbReference>
<dbReference type="KEGG" id="rru:Rru_A1142"/>
<dbReference type="PATRIC" id="fig|269796.9.peg.1202"/>
<dbReference type="eggNOG" id="COG0112">
    <property type="taxonomic scope" value="Bacteria"/>
</dbReference>
<dbReference type="HOGENOM" id="CLU_022477_2_1_5"/>
<dbReference type="PhylomeDB" id="Q2RVA2"/>
<dbReference type="UniPathway" id="UPA00193"/>
<dbReference type="UniPathway" id="UPA00288">
    <property type="reaction ID" value="UER01023"/>
</dbReference>
<dbReference type="Proteomes" id="UP000001929">
    <property type="component" value="Chromosome"/>
</dbReference>
<dbReference type="GO" id="GO:0005829">
    <property type="term" value="C:cytosol"/>
    <property type="evidence" value="ECO:0007669"/>
    <property type="project" value="TreeGrafter"/>
</dbReference>
<dbReference type="GO" id="GO:0004372">
    <property type="term" value="F:glycine hydroxymethyltransferase activity"/>
    <property type="evidence" value="ECO:0007669"/>
    <property type="project" value="UniProtKB-UniRule"/>
</dbReference>
<dbReference type="GO" id="GO:0030170">
    <property type="term" value="F:pyridoxal phosphate binding"/>
    <property type="evidence" value="ECO:0007669"/>
    <property type="project" value="UniProtKB-UniRule"/>
</dbReference>
<dbReference type="GO" id="GO:0019264">
    <property type="term" value="P:glycine biosynthetic process from serine"/>
    <property type="evidence" value="ECO:0007669"/>
    <property type="project" value="UniProtKB-UniRule"/>
</dbReference>
<dbReference type="GO" id="GO:0035999">
    <property type="term" value="P:tetrahydrofolate interconversion"/>
    <property type="evidence" value="ECO:0007669"/>
    <property type="project" value="UniProtKB-UniRule"/>
</dbReference>
<dbReference type="CDD" id="cd00378">
    <property type="entry name" value="SHMT"/>
    <property type="match status" value="1"/>
</dbReference>
<dbReference type="FunFam" id="3.40.640.10:FF:000001">
    <property type="entry name" value="Serine hydroxymethyltransferase"/>
    <property type="match status" value="1"/>
</dbReference>
<dbReference type="Gene3D" id="3.90.1150.10">
    <property type="entry name" value="Aspartate Aminotransferase, domain 1"/>
    <property type="match status" value="1"/>
</dbReference>
<dbReference type="Gene3D" id="3.40.640.10">
    <property type="entry name" value="Type I PLP-dependent aspartate aminotransferase-like (Major domain)"/>
    <property type="match status" value="1"/>
</dbReference>
<dbReference type="HAMAP" id="MF_00051">
    <property type="entry name" value="SHMT"/>
    <property type="match status" value="1"/>
</dbReference>
<dbReference type="InterPro" id="IPR015424">
    <property type="entry name" value="PyrdxlP-dep_Trfase"/>
</dbReference>
<dbReference type="InterPro" id="IPR015421">
    <property type="entry name" value="PyrdxlP-dep_Trfase_major"/>
</dbReference>
<dbReference type="InterPro" id="IPR015422">
    <property type="entry name" value="PyrdxlP-dep_Trfase_small"/>
</dbReference>
<dbReference type="InterPro" id="IPR001085">
    <property type="entry name" value="Ser_HO-MeTrfase"/>
</dbReference>
<dbReference type="InterPro" id="IPR049943">
    <property type="entry name" value="Ser_HO-MeTrfase-like"/>
</dbReference>
<dbReference type="InterPro" id="IPR019798">
    <property type="entry name" value="Ser_HO-MeTrfase_PLP_BS"/>
</dbReference>
<dbReference type="InterPro" id="IPR039429">
    <property type="entry name" value="SHMT-like_dom"/>
</dbReference>
<dbReference type="NCBIfam" id="NF000586">
    <property type="entry name" value="PRK00011.1"/>
    <property type="match status" value="1"/>
</dbReference>
<dbReference type="PANTHER" id="PTHR11680">
    <property type="entry name" value="SERINE HYDROXYMETHYLTRANSFERASE"/>
    <property type="match status" value="1"/>
</dbReference>
<dbReference type="PANTHER" id="PTHR11680:SF35">
    <property type="entry name" value="SERINE HYDROXYMETHYLTRANSFERASE 1"/>
    <property type="match status" value="1"/>
</dbReference>
<dbReference type="Pfam" id="PF00464">
    <property type="entry name" value="SHMT"/>
    <property type="match status" value="1"/>
</dbReference>
<dbReference type="PIRSF" id="PIRSF000412">
    <property type="entry name" value="SHMT"/>
    <property type="match status" value="1"/>
</dbReference>
<dbReference type="SUPFAM" id="SSF53383">
    <property type="entry name" value="PLP-dependent transferases"/>
    <property type="match status" value="1"/>
</dbReference>
<dbReference type="PROSITE" id="PS00096">
    <property type="entry name" value="SHMT"/>
    <property type="match status" value="1"/>
</dbReference>
<evidence type="ECO:0000255" key="1">
    <source>
        <dbReference type="HAMAP-Rule" id="MF_00051"/>
    </source>
</evidence>
<proteinExistence type="inferred from homology"/>
<keyword id="KW-0028">Amino-acid biosynthesis</keyword>
<keyword id="KW-0963">Cytoplasm</keyword>
<keyword id="KW-0554">One-carbon metabolism</keyword>
<keyword id="KW-0663">Pyridoxal phosphate</keyword>
<keyword id="KW-1185">Reference proteome</keyword>
<keyword id="KW-0808">Transferase</keyword>
<sequence>MEASVAPPALRNAPCAGVNAACLSAADDAVAIAIAQETTRQRESIELIASENFVSKAVLEAQGSVLTNKYAEGYPQRRYYGGCANVDRVEDLAIARLNQLFGSTYANVQPHSGSQANQAVFLALLAPGDTILGLDLKAGGHLTHGAPVNISGRWFTAVSYGVDPRTHLIDMEQMADLARRHRPKLLIAGGSAYPRLLDFARFRQIADEVGAILMVDMAHFAGLVAGGVYPSPVPFADVITSTTHKTLRGPRGGFVLTNDAAIAKKINSAVFPGLQGGPLMHIIAAKAVAFGEALDPSFKIYARRVVENCRVLAQTLLDGGLAITSGGTDCHLAVVDLRPLGVTGTIAEQALESIGITLNKNAIPNDPEKPMVTSGIRVGSAAGTSRGFGPEEYRRIAALILETLHAVRAGTLEADREGIRTRVRSLVAGFPLPY</sequence>
<protein>
    <recommendedName>
        <fullName evidence="1">Serine hydroxymethyltransferase 1</fullName>
        <shortName evidence="1">SHMT 1</shortName>
        <shortName evidence="1">Serine methylase 1</shortName>
        <ecNumber evidence="1">2.1.2.1</ecNumber>
    </recommendedName>
</protein>
<organism>
    <name type="scientific">Rhodospirillum rubrum (strain ATCC 11170 / ATH 1.1.1 / DSM 467 / LMG 4362 / NCIMB 8255 / S1)</name>
    <dbReference type="NCBI Taxonomy" id="269796"/>
    <lineage>
        <taxon>Bacteria</taxon>
        <taxon>Pseudomonadati</taxon>
        <taxon>Pseudomonadota</taxon>
        <taxon>Alphaproteobacteria</taxon>
        <taxon>Rhodospirillales</taxon>
        <taxon>Rhodospirillaceae</taxon>
        <taxon>Rhodospirillum</taxon>
    </lineage>
</organism>
<feature type="chain" id="PRO_0000235015" description="Serine hydroxymethyltransferase 1">
    <location>
        <begin position="1"/>
        <end position="434"/>
    </location>
</feature>
<feature type="binding site" evidence="1">
    <location>
        <position position="136"/>
    </location>
    <ligand>
        <name>(6S)-5,6,7,8-tetrahydrofolate</name>
        <dbReference type="ChEBI" id="CHEBI:57453"/>
    </ligand>
</feature>
<feature type="binding site" evidence="1">
    <location>
        <begin position="140"/>
        <end position="142"/>
    </location>
    <ligand>
        <name>(6S)-5,6,7,8-tetrahydrofolate</name>
        <dbReference type="ChEBI" id="CHEBI:57453"/>
    </ligand>
</feature>
<feature type="site" description="Plays an important role in substrate specificity" evidence="1">
    <location>
        <position position="244"/>
    </location>
</feature>
<feature type="modified residue" description="N6-(pyridoxal phosphate)lysine" evidence="1">
    <location>
        <position position="245"/>
    </location>
</feature>
<accession>Q2RVA2</accession>
<comment type="function">
    <text evidence="1">Catalyzes the reversible interconversion of serine and glycine with tetrahydrofolate (THF) serving as the one-carbon carrier. This reaction serves as the major source of one-carbon groups required for the biosynthesis of purines, thymidylate, methionine, and other important biomolecules. Also exhibits THF-independent aldolase activity toward beta-hydroxyamino acids, producing glycine and aldehydes, via a retro-aldol mechanism.</text>
</comment>
<comment type="catalytic activity">
    <reaction evidence="1">
        <text>(6R)-5,10-methylene-5,6,7,8-tetrahydrofolate + glycine + H2O = (6S)-5,6,7,8-tetrahydrofolate + L-serine</text>
        <dbReference type="Rhea" id="RHEA:15481"/>
        <dbReference type="ChEBI" id="CHEBI:15377"/>
        <dbReference type="ChEBI" id="CHEBI:15636"/>
        <dbReference type="ChEBI" id="CHEBI:33384"/>
        <dbReference type="ChEBI" id="CHEBI:57305"/>
        <dbReference type="ChEBI" id="CHEBI:57453"/>
        <dbReference type="EC" id="2.1.2.1"/>
    </reaction>
</comment>
<comment type="cofactor">
    <cofactor evidence="1">
        <name>pyridoxal 5'-phosphate</name>
        <dbReference type="ChEBI" id="CHEBI:597326"/>
    </cofactor>
</comment>
<comment type="pathway">
    <text evidence="1">One-carbon metabolism; tetrahydrofolate interconversion.</text>
</comment>
<comment type="pathway">
    <text evidence="1">Amino-acid biosynthesis; glycine biosynthesis; glycine from L-serine: step 1/1.</text>
</comment>
<comment type="subunit">
    <text evidence="1">Homodimer.</text>
</comment>
<comment type="subcellular location">
    <subcellularLocation>
        <location evidence="1">Cytoplasm</location>
    </subcellularLocation>
</comment>
<comment type="similarity">
    <text evidence="1">Belongs to the SHMT family.</text>
</comment>
<gene>
    <name evidence="1" type="primary">glyA1</name>
    <name type="ordered locus">Rru_A1142</name>
</gene>
<reference key="1">
    <citation type="journal article" date="2011" name="Stand. Genomic Sci.">
        <title>Complete genome sequence of Rhodospirillum rubrum type strain (S1).</title>
        <authorList>
            <person name="Munk A.C."/>
            <person name="Copeland A."/>
            <person name="Lucas S."/>
            <person name="Lapidus A."/>
            <person name="Del Rio T.G."/>
            <person name="Barry K."/>
            <person name="Detter J.C."/>
            <person name="Hammon N."/>
            <person name="Israni S."/>
            <person name="Pitluck S."/>
            <person name="Brettin T."/>
            <person name="Bruce D."/>
            <person name="Han C."/>
            <person name="Tapia R."/>
            <person name="Gilna P."/>
            <person name="Schmutz J."/>
            <person name="Larimer F."/>
            <person name="Land M."/>
            <person name="Kyrpides N.C."/>
            <person name="Mavromatis K."/>
            <person name="Richardson P."/>
            <person name="Rohde M."/>
            <person name="Goeker M."/>
            <person name="Klenk H.P."/>
            <person name="Zhang Y."/>
            <person name="Roberts G.P."/>
            <person name="Reslewic S."/>
            <person name="Schwartz D.C."/>
        </authorList>
    </citation>
    <scope>NUCLEOTIDE SEQUENCE [LARGE SCALE GENOMIC DNA]</scope>
    <source>
        <strain>ATCC 11170 / ATH 1.1.1 / DSM 467 / LMG 4362 / NCIMB 8255 / S1</strain>
    </source>
</reference>